<accession>Q057T1</accession>
<proteinExistence type="inferred from homology"/>
<name>RS2_BUCCC</name>
<feature type="chain" id="PRO_1000003905" description="Small ribosomal subunit protein uS2">
    <location>
        <begin position="1"/>
        <end position="241"/>
    </location>
</feature>
<gene>
    <name evidence="1" type="primary">rpsB</name>
    <name type="ordered locus">BCc_142</name>
</gene>
<protein>
    <recommendedName>
        <fullName evidence="1">Small ribosomal subunit protein uS2</fullName>
    </recommendedName>
    <alternativeName>
        <fullName evidence="2">30S ribosomal protein S2</fullName>
    </alternativeName>
</protein>
<keyword id="KW-1185">Reference proteome</keyword>
<keyword id="KW-0687">Ribonucleoprotein</keyword>
<keyword id="KW-0689">Ribosomal protein</keyword>
<sequence>MDIALMKNMIKAGVHFGHQTRYWNPKMKPFIFGIKNKVHIINLEKTLPLFRLAINELKKTIKFNGKILFVGTKRSASAAIKSIALSCNQFYVNHRWLGGMLTNWKTVRQSINKLKDLEKQSLDGTFDKLTKKEVLLRIRLLNKLENSLGGIKNMGGLPDAIFIIDTAYEHIAIREANHLGIPVFAIVDTNSSPDGVNYIIPGNDDAIRSINLYLNILSDELSKCYKEKKESIILKNRLKEQ</sequence>
<evidence type="ECO:0000255" key="1">
    <source>
        <dbReference type="HAMAP-Rule" id="MF_00291"/>
    </source>
</evidence>
<evidence type="ECO:0000305" key="2"/>
<dbReference type="EMBL" id="CP000263">
    <property type="protein sequence ID" value="ABJ90618.1"/>
    <property type="molecule type" value="Genomic_DNA"/>
</dbReference>
<dbReference type="RefSeq" id="WP_011672537.1">
    <property type="nucleotide sequence ID" value="NC_008513.1"/>
</dbReference>
<dbReference type="SMR" id="Q057T1"/>
<dbReference type="STRING" id="372461.BCc_142"/>
<dbReference type="KEGG" id="bcc:BCc_142"/>
<dbReference type="eggNOG" id="COG0052">
    <property type="taxonomic scope" value="Bacteria"/>
</dbReference>
<dbReference type="HOGENOM" id="CLU_040318_1_2_6"/>
<dbReference type="OrthoDB" id="9808036at2"/>
<dbReference type="Proteomes" id="UP000000669">
    <property type="component" value="Chromosome"/>
</dbReference>
<dbReference type="GO" id="GO:0022627">
    <property type="term" value="C:cytosolic small ribosomal subunit"/>
    <property type="evidence" value="ECO:0007669"/>
    <property type="project" value="TreeGrafter"/>
</dbReference>
<dbReference type="GO" id="GO:0003735">
    <property type="term" value="F:structural constituent of ribosome"/>
    <property type="evidence" value="ECO:0007669"/>
    <property type="project" value="InterPro"/>
</dbReference>
<dbReference type="GO" id="GO:0006412">
    <property type="term" value="P:translation"/>
    <property type="evidence" value="ECO:0007669"/>
    <property type="project" value="UniProtKB-UniRule"/>
</dbReference>
<dbReference type="CDD" id="cd01425">
    <property type="entry name" value="RPS2"/>
    <property type="match status" value="1"/>
</dbReference>
<dbReference type="FunFam" id="1.10.287.610:FF:000001">
    <property type="entry name" value="30S ribosomal protein S2"/>
    <property type="match status" value="1"/>
</dbReference>
<dbReference type="Gene3D" id="3.40.50.10490">
    <property type="entry name" value="Glucose-6-phosphate isomerase like protein, domain 1"/>
    <property type="match status" value="1"/>
</dbReference>
<dbReference type="Gene3D" id="1.10.287.610">
    <property type="entry name" value="Helix hairpin bin"/>
    <property type="match status" value="1"/>
</dbReference>
<dbReference type="HAMAP" id="MF_00291_B">
    <property type="entry name" value="Ribosomal_uS2_B"/>
    <property type="match status" value="1"/>
</dbReference>
<dbReference type="InterPro" id="IPR001865">
    <property type="entry name" value="Ribosomal_uS2"/>
</dbReference>
<dbReference type="InterPro" id="IPR005706">
    <property type="entry name" value="Ribosomal_uS2_bac/mit/plastid"/>
</dbReference>
<dbReference type="InterPro" id="IPR018130">
    <property type="entry name" value="Ribosomal_uS2_CS"/>
</dbReference>
<dbReference type="InterPro" id="IPR023591">
    <property type="entry name" value="Ribosomal_uS2_flav_dom_sf"/>
</dbReference>
<dbReference type="NCBIfam" id="TIGR01011">
    <property type="entry name" value="rpsB_bact"/>
    <property type="match status" value="1"/>
</dbReference>
<dbReference type="PANTHER" id="PTHR12534">
    <property type="entry name" value="30S RIBOSOMAL PROTEIN S2 PROKARYOTIC AND ORGANELLAR"/>
    <property type="match status" value="1"/>
</dbReference>
<dbReference type="PANTHER" id="PTHR12534:SF0">
    <property type="entry name" value="SMALL RIBOSOMAL SUBUNIT PROTEIN US2M"/>
    <property type="match status" value="1"/>
</dbReference>
<dbReference type="Pfam" id="PF00318">
    <property type="entry name" value="Ribosomal_S2"/>
    <property type="match status" value="1"/>
</dbReference>
<dbReference type="PRINTS" id="PR00395">
    <property type="entry name" value="RIBOSOMALS2"/>
</dbReference>
<dbReference type="SUPFAM" id="SSF52313">
    <property type="entry name" value="Ribosomal protein S2"/>
    <property type="match status" value="1"/>
</dbReference>
<dbReference type="PROSITE" id="PS00962">
    <property type="entry name" value="RIBOSOMAL_S2_1"/>
    <property type="match status" value="1"/>
</dbReference>
<dbReference type="PROSITE" id="PS00963">
    <property type="entry name" value="RIBOSOMAL_S2_2"/>
    <property type="match status" value="1"/>
</dbReference>
<organism>
    <name type="scientific">Buchnera aphidicola subsp. Cinara cedri (strain Cc)</name>
    <dbReference type="NCBI Taxonomy" id="372461"/>
    <lineage>
        <taxon>Bacteria</taxon>
        <taxon>Pseudomonadati</taxon>
        <taxon>Pseudomonadota</taxon>
        <taxon>Gammaproteobacteria</taxon>
        <taxon>Enterobacterales</taxon>
        <taxon>Erwiniaceae</taxon>
        <taxon>Buchnera</taxon>
    </lineage>
</organism>
<reference key="1">
    <citation type="journal article" date="2006" name="Science">
        <title>A small microbial genome: the end of a long symbiotic relationship?</title>
        <authorList>
            <person name="Perez-Brocal V."/>
            <person name="Gil R."/>
            <person name="Ramos S."/>
            <person name="Lamelas A."/>
            <person name="Postigo M."/>
            <person name="Michelena J.M."/>
            <person name="Silva F.J."/>
            <person name="Moya A."/>
            <person name="Latorre A."/>
        </authorList>
    </citation>
    <scope>NUCLEOTIDE SEQUENCE [LARGE SCALE GENOMIC DNA]</scope>
    <source>
        <strain>Cc</strain>
    </source>
</reference>
<comment type="similarity">
    <text evidence="1">Belongs to the universal ribosomal protein uS2 family.</text>
</comment>